<proteinExistence type="inferred from homology"/>
<protein>
    <recommendedName>
        <fullName evidence="1">S-adenosylmethionine synthase</fullName>
        <shortName evidence="1">AdoMet synthase</shortName>
        <ecNumber evidence="1">2.5.1.6</ecNumber>
    </recommendedName>
    <alternativeName>
        <fullName evidence="1">MAT</fullName>
    </alternativeName>
    <alternativeName>
        <fullName evidence="1">Methionine adenosyltransferase</fullName>
    </alternativeName>
</protein>
<gene>
    <name evidence="1" type="primary">metK</name>
    <name type="ordered locus">ROP_69390</name>
</gene>
<dbReference type="EC" id="2.5.1.6" evidence="1"/>
<dbReference type="EMBL" id="AP011115">
    <property type="protein sequence ID" value="BAH55186.1"/>
    <property type="molecule type" value="Genomic_DNA"/>
</dbReference>
<dbReference type="RefSeq" id="WP_005241739.1">
    <property type="nucleotide sequence ID" value="NC_012522.1"/>
</dbReference>
<dbReference type="SMR" id="C1B4J7"/>
<dbReference type="STRING" id="632772.ROP_69390"/>
<dbReference type="GeneID" id="69891569"/>
<dbReference type="KEGG" id="rop:ROP_69390"/>
<dbReference type="PATRIC" id="fig|632772.20.peg.7230"/>
<dbReference type="HOGENOM" id="CLU_041802_1_1_11"/>
<dbReference type="OrthoDB" id="9801686at2"/>
<dbReference type="UniPathway" id="UPA00315">
    <property type="reaction ID" value="UER00080"/>
</dbReference>
<dbReference type="Proteomes" id="UP000002212">
    <property type="component" value="Chromosome"/>
</dbReference>
<dbReference type="GO" id="GO:0005737">
    <property type="term" value="C:cytoplasm"/>
    <property type="evidence" value="ECO:0007669"/>
    <property type="project" value="UniProtKB-SubCell"/>
</dbReference>
<dbReference type="GO" id="GO:0005524">
    <property type="term" value="F:ATP binding"/>
    <property type="evidence" value="ECO:0007669"/>
    <property type="project" value="UniProtKB-UniRule"/>
</dbReference>
<dbReference type="GO" id="GO:0000287">
    <property type="term" value="F:magnesium ion binding"/>
    <property type="evidence" value="ECO:0007669"/>
    <property type="project" value="UniProtKB-UniRule"/>
</dbReference>
<dbReference type="GO" id="GO:0004478">
    <property type="term" value="F:methionine adenosyltransferase activity"/>
    <property type="evidence" value="ECO:0007669"/>
    <property type="project" value="UniProtKB-UniRule"/>
</dbReference>
<dbReference type="GO" id="GO:0006730">
    <property type="term" value="P:one-carbon metabolic process"/>
    <property type="evidence" value="ECO:0007669"/>
    <property type="project" value="UniProtKB-KW"/>
</dbReference>
<dbReference type="GO" id="GO:0006556">
    <property type="term" value="P:S-adenosylmethionine biosynthetic process"/>
    <property type="evidence" value="ECO:0007669"/>
    <property type="project" value="UniProtKB-UniRule"/>
</dbReference>
<dbReference type="CDD" id="cd18079">
    <property type="entry name" value="S-AdoMet_synt"/>
    <property type="match status" value="1"/>
</dbReference>
<dbReference type="FunFam" id="3.30.300.10:FF:000006">
    <property type="entry name" value="S-adenosylmethionine synthase"/>
    <property type="match status" value="1"/>
</dbReference>
<dbReference type="Gene3D" id="3.30.300.10">
    <property type="match status" value="3"/>
</dbReference>
<dbReference type="HAMAP" id="MF_00086">
    <property type="entry name" value="S_AdoMet_synth1"/>
    <property type="match status" value="1"/>
</dbReference>
<dbReference type="InterPro" id="IPR022631">
    <property type="entry name" value="ADOMET_SYNTHASE_CS"/>
</dbReference>
<dbReference type="InterPro" id="IPR022630">
    <property type="entry name" value="S-AdoMet_synt_C"/>
</dbReference>
<dbReference type="InterPro" id="IPR022629">
    <property type="entry name" value="S-AdoMet_synt_central"/>
</dbReference>
<dbReference type="InterPro" id="IPR022628">
    <property type="entry name" value="S-AdoMet_synt_N"/>
</dbReference>
<dbReference type="InterPro" id="IPR002133">
    <property type="entry name" value="S-AdoMet_synthetase"/>
</dbReference>
<dbReference type="InterPro" id="IPR022636">
    <property type="entry name" value="S-AdoMet_synthetase_sfam"/>
</dbReference>
<dbReference type="NCBIfam" id="TIGR01034">
    <property type="entry name" value="metK"/>
    <property type="match status" value="1"/>
</dbReference>
<dbReference type="PANTHER" id="PTHR11964">
    <property type="entry name" value="S-ADENOSYLMETHIONINE SYNTHETASE"/>
    <property type="match status" value="1"/>
</dbReference>
<dbReference type="Pfam" id="PF02773">
    <property type="entry name" value="S-AdoMet_synt_C"/>
    <property type="match status" value="1"/>
</dbReference>
<dbReference type="Pfam" id="PF02772">
    <property type="entry name" value="S-AdoMet_synt_M"/>
    <property type="match status" value="1"/>
</dbReference>
<dbReference type="Pfam" id="PF00438">
    <property type="entry name" value="S-AdoMet_synt_N"/>
    <property type="match status" value="1"/>
</dbReference>
<dbReference type="PIRSF" id="PIRSF000497">
    <property type="entry name" value="MAT"/>
    <property type="match status" value="1"/>
</dbReference>
<dbReference type="SUPFAM" id="SSF55973">
    <property type="entry name" value="S-adenosylmethionine synthetase"/>
    <property type="match status" value="3"/>
</dbReference>
<dbReference type="PROSITE" id="PS00376">
    <property type="entry name" value="ADOMET_SYNTHASE_1"/>
    <property type="match status" value="1"/>
</dbReference>
<dbReference type="PROSITE" id="PS00377">
    <property type="entry name" value="ADOMET_SYNTHASE_2"/>
    <property type="match status" value="1"/>
</dbReference>
<organism>
    <name type="scientific">Rhodococcus opacus (strain B4)</name>
    <dbReference type="NCBI Taxonomy" id="632772"/>
    <lineage>
        <taxon>Bacteria</taxon>
        <taxon>Bacillati</taxon>
        <taxon>Actinomycetota</taxon>
        <taxon>Actinomycetes</taxon>
        <taxon>Mycobacteriales</taxon>
        <taxon>Nocardiaceae</taxon>
        <taxon>Rhodococcus</taxon>
    </lineage>
</organism>
<reference key="1">
    <citation type="submission" date="2009-03" db="EMBL/GenBank/DDBJ databases">
        <title>Comparison of the complete genome sequences of Rhodococcus erythropolis PR4 and Rhodococcus opacus B4.</title>
        <authorList>
            <person name="Takarada H."/>
            <person name="Sekine M."/>
            <person name="Hosoyama A."/>
            <person name="Yamada R."/>
            <person name="Fujisawa T."/>
            <person name="Omata S."/>
            <person name="Shimizu A."/>
            <person name="Tsukatani N."/>
            <person name="Tanikawa S."/>
            <person name="Fujita N."/>
            <person name="Harayama S."/>
        </authorList>
    </citation>
    <scope>NUCLEOTIDE SEQUENCE [LARGE SCALE GENOMIC DNA]</scope>
    <source>
        <strain>B4</strain>
    </source>
</reference>
<evidence type="ECO:0000255" key="1">
    <source>
        <dbReference type="HAMAP-Rule" id="MF_00086"/>
    </source>
</evidence>
<accession>C1B4J7</accession>
<comment type="function">
    <text evidence="1">Catalyzes the formation of S-adenosylmethionine (AdoMet) from methionine and ATP. The overall synthetic reaction is composed of two sequential steps, AdoMet formation and the subsequent tripolyphosphate hydrolysis which occurs prior to release of AdoMet from the enzyme.</text>
</comment>
<comment type="catalytic activity">
    <reaction evidence="1">
        <text>L-methionine + ATP + H2O = S-adenosyl-L-methionine + phosphate + diphosphate</text>
        <dbReference type="Rhea" id="RHEA:21080"/>
        <dbReference type="ChEBI" id="CHEBI:15377"/>
        <dbReference type="ChEBI" id="CHEBI:30616"/>
        <dbReference type="ChEBI" id="CHEBI:33019"/>
        <dbReference type="ChEBI" id="CHEBI:43474"/>
        <dbReference type="ChEBI" id="CHEBI:57844"/>
        <dbReference type="ChEBI" id="CHEBI:59789"/>
        <dbReference type="EC" id="2.5.1.6"/>
    </reaction>
</comment>
<comment type="cofactor">
    <cofactor evidence="1">
        <name>Mg(2+)</name>
        <dbReference type="ChEBI" id="CHEBI:18420"/>
    </cofactor>
    <text evidence="1">Binds 2 divalent ions per subunit.</text>
</comment>
<comment type="cofactor">
    <cofactor evidence="1">
        <name>K(+)</name>
        <dbReference type="ChEBI" id="CHEBI:29103"/>
    </cofactor>
    <text evidence="1">Binds 1 potassium ion per subunit.</text>
</comment>
<comment type="pathway">
    <text evidence="1">Amino-acid biosynthesis; S-adenosyl-L-methionine biosynthesis; S-adenosyl-L-methionine from L-methionine: step 1/1.</text>
</comment>
<comment type="subunit">
    <text evidence="1">Homotetramer; dimer of dimers.</text>
</comment>
<comment type="subcellular location">
    <subcellularLocation>
        <location evidence="1">Cytoplasm</location>
    </subcellularLocation>
</comment>
<comment type="similarity">
    <text evidence="1">Belongs to the AdoMet synthase family.</text>
</comment>
<name>METK_RHOOB</name>
<feature type="chain" id="PRO_1000196723" description="S-adenosylmethionine synthase">
    <location>
        <begin position="1"/>
        <end position="404"/>
    </location>
</feature>
<feature type="region of interest" description="Flexible loop" evidence="1">
    <location>
        <begin position="102"/>
        <end position="112"/>
    </location>
</feature>
<feature type="binding site" description="in other chain" evidence="1">
    <location>
        <position position="18"/>
    </location>
    <ligand>
        <name>ATP</name>
        <dbReference type="ChEBI" id="CHEBI:30616"/>
        <note>ligand shared between two neighboring subunits</note>
    </ligand>
</feature>
<feature type="binding site" evidence="1">
    <location>
        <position position="20"/>
    </location>
    <ligand>
        <name>Mg(2+)</name>
        <dbReference type="ChEBI" id="CHEBI:18420"/>
    </ligand>
</feature>
<feature type="binding site" evidence="1">
    <location>
        <position position="46"/>
    </location>
    <ligand>
        <name>K(+)</name>
        <dbReference type="ChEBI" id="CHEBI:29103"/>
    </ligand>
</feature>
<feature type="binding site" description="in other chain" evidence="1">
    <location>
        <position position="59"/>
    </location>
    <ligand>
        <name>L-methionine</name>
        <dbReference type="ChEBI" id="CHEBI:57844"/>
        <note>ligand shared between two neighboring subunits</note>
    </ligand>
</feature>
<feature type="binding site" description="in other chain" evidence="1">
    <location>
        <position position="102"/>
    </location>
    <ligand>
        <name>L-methionine</name>
        <dbReference type="ChEBI" id="CHEBI:57844"/>
        <note>ligand shared between two neighboring subunits</note>
    </ligand>
</feature>
<feature type="binding site" description="in other chain" evidence="1">
    <location>
        <begin position="178"/>
        <end position="180"/>
    </location>
    <ligand>
        <name>ATP</name>
        <dbReference type="ChEBI" id="CHEBI:30616"/>
        <note>ligand shared between two neighboring subunits</note>
    </ligand>
</feature>
<feature type="binding site" description="in other chain" evidence="1">
    <location>
        <begin position="249"/>
        <end position="250"/>
    </location>
    <ligand>
        <name>ATP</name>
        <dbReference type="ChEBI" id="CHEBI:30616"/>
        <note>ligand shared between two neighboring subunits</note>
    </ligand>
</feature>
<feature type="binding site" evidence="1">
    <location>
        <position position="258"/>
    </location>
    <ligand>
        <name>ATP</name>
        <dbReference type="ChEBI" id="CHEBI:30616"/>
        <note>ligand shared between two neighboring subunits</note>
    </ligand>
</feature>
<feature type="binding site" evidence="1">
    <location>
        <position position="258"/>
    </location>
    <ligand>
        <name>L-methionine</name>
        <dbReference type="ChEBI" id="CHEBI:57844"/>
        <note>ligand shared between two neighboring subunits</note>
    </ligand>
</feature>
<feature type="binding site" description="in other chain" evidence="1">
    <location>
        <begin position="264"/>
        <end position="265"/>
    </location>
    <ligand>
        <name>ATP</name>
        <dbReference type="ChEBI" id="CHEBI:30616"/>
        <note>ligand shared between two neighboring subunits</note>
    </ligand>
</feature>
<feature type="binding site" evidence="1">
    <location>
        <position position="281"/>
    </location>
    <ligand>
        <name>ATP</name>
        <dbReference type="ChEBI" id="CHEBI:30616"/>
        <note>ligand shared between two neighboring subunits</note>
    </ligand>
</feature>
<feature type="binding site" evidence="1">
    <location>
        <position position="285"/>
    </location>
    <ligand>
        <name>ATP</name>
        <dbReference type="ChEBI" id="CHEBI:30616"/>
        <note>ligand shared between two neighboring subunits</note>
    </ligand>
</feature>
<feature type="binding site" description="in other chain" evidence="1">
    <location>
        <position position="289"/>
    </location>
    <ligand>
        <name>L-methionine</name>
        <dbReference type="ChEBI" id="CHEBI:57844"/>
        <note>ligand shared between two neighboring subunits</note>
    </ligand>
</feature>
<keyword id="KW-0067">ATP-binding</keyword>
<keyword id="KW-0963">Cytoplasm</keyword>
<keyword id="KW-0460">Magnesium</keyword>
<keyword id="KW-0479">Metal-binding</keyword>
<keyword id="KW-0547">Nucleotide-binding</keyword>
<keyword id="KW-0554">One-carbon metabolism</keyword>
<keyword id="KW-0630">Potassium</keyword>
<keyword id="KW-0808">Transferase</keyword>
<sequence>MSQSGSRLFTSESVTEGHPDKICDAISDSILDALLTDDPRARVAVETLVTTGQVHVAGEVTTTAYADIPKIVRDTVLEIGYDSSAKGFDGNSCGVNVAIGAQSPEIAQGVDHSHEVRTGELSDDEIDRQGAGDQGLMFGFATTDTPELMPLPIALAHRLSRRLTEVRKSGVLPYLRPDGKTQVTIEYDGDKAVRLDTVVISTQHAADIDLDNLLTPDLREKVLGSVLAEIDMPELDVSDIRLLVNPTGKFVLGGPMGDAGLTGRKIIVDTYGGMARHGGGAFSGKDPSKVDRSAAYAMRWVAKNAVAAGLADRIEVQVAYAIGKAAPVGLFVETFGTEKTDPARIQQAITETFDLRPGAIIRDLDLLRPIYAQTAAYGHFGRTDIDLPWESIDRAEKLRAAAGL</sequence>